<gene>
    <name type="primary">yhcJ</name>
    <name type="ordered locus">BSU09110</name>
</gene>
<dbReference type="EMBL" id="X96983">
    <property type="protein sequence ID" value="CAA65694.1"/>
    <property type="molecule type" value="Genomic_DNA"/>
</dbReference>
<dbReference type="EMBL" id="U58859">
    <property type="protein sequence ID" value="AAB01345.1"/>
    <property type="molecule type" value="Genomic_DNA"/>
</dbReference>
<dbReference type="EMBL" id="AL009126">
    <property type="protein sequence ID" value="CAB12739.2"/>
    <property type="molecule type" value="Genomic_DNA"/>
</dbReference>
<dbReference type="PIR" id="F69822">
    <property type="entry name" value="F69822"/>
</dbReference>
<dbReference type="RefSeq" id="NP_388792.2">
    <property type="nucleotide sequence ID" value="NC_000964.3"/>
</dbReference>
<dbReference type="RefSeq" id="WP_003245726.1">
    <property type="nucleotide sequence ID" value="NZ_OZ025638.1"/>
</dbReference>
<dbReference type="SMR" id="P54594"/>
<dbReference type="FunCoup" id="P54594">
    <property type="interactions" value="173"/>
</dbReference>
<dbReference type="STRING" id="224308.BSU09110"/>
<dbReference type="PaxDb" id="224308-BSU09110"/>
<dbReference type="EnsemblBacteria" id="CAB12739">
    <property type="protein sequence ID" value="CAB12739"/>
    <property type="gene ID" value="BSU_09110"/>
</dbReference>
<dbReference type="GeneID" id="939261"/>
<dbReference type="KEGG" id="bsu:BSU09110"/>
<dbReference type="PATRIC" id="fig|224308.179.peg.985"/>
<dbReference type="eggNOG" id="COG1464">
    <property type="taxonomic scope" value="Bacteria"/>
</dbReference>
<dbReference type="InParanoid" id="P54594"/>
<dbReference type="OrthoDB" id="9812878at2"/>
<dbReference type="PhylomeDB" id="P54594"/>
<dbReference type="BioCyc" id="BSUB:BSU09110-MONOMER"/>
<dbReference type="Proteomes" id="UP000001570">
    <property type="component" value="Chromosome"/>
</dbReference>
<dbReference type="GO" id="GO:0005886">
    <property type="term" value="C:plasma membrane"/>
    <property type="evidence" value="ECO:0000318"/>
    <property type="project" value="GO_Central"/>
</dbReference>
<dbReference type="GO" id="GO:0048473">
    <property type="term" value="P:D-methionine transmembrane transport"/>
    <property type="evidence" value="ECO:0000318"/>
    <property type="project" value="GO_Central"/>
</dbReference>
<dbReference type="GO" id="GO:1903692">
    <property type="term" value="P:methionine import across plasma membrane"/>
    <property type="evidence" value="ECO:0000318"/>
    <property type="project" value="GO_Central"/>
</dbReference>
<dbReference type="Gene3D" id="3.40.190.10">
    <property type="entry name" value="Periplasmic binding protein-like II"/>
    <property type="match status" value="2"/>
</dbReference>
<dbReference type="InterPro" id="IPR004872">
    <property type="entry name" value="Lipoprotein_NlpA"/>
</dbReference>
<dbReference type="PANTHER" id="PTHR30429">
    <property type="entry name" value="D-METHIONINE-BINDING LIPOPROTEIN METQ"/>
    <property type="match status" value="1"/>
</dbReference>
<dbReference type="PANTHER" id="PTHR30429:SF3">
    <property type="entry name" value="LIPOPROTEIN"/>
    <property type="match status" value="1"/>
</dbReference>
<dbReference type="Pfam" id="PF03180">
    <property type="entry name" value="Lipoprotein_9"/>
    <property type="match status" value="1"/>
</dbReference>
<dbReference type="SUPFAM" id="SSF53850">
    <property type="entry name" value="Periplasmic binding protein-like II"/>
    <property type="match status" value="1"/>
</dbReference>
<dbReference type="PROSITE" id="PS51257">
    <property type="entry name" value="PROKAR_LIPOPROTEIN"/>
    <property type="match status" value="1"/>
</dbReference>
<keyword id="KW-1003">Cell membrane</keyword>
<keyword id="KW-0449">Lipoprotein</keyword>
<keyword id="KW-0472">Membrane</keyword>
<keyword id="KW-0564">Palmitate</keyword>
<keyword id="KW-1185">Reference proteome</keyword>
<keyword id="KW-0732">Signal</keyword>
<feature type="signal peptide" evidence="1">
    <location>
        <begin position="1"/>
        <end position="19"/>
    </location>
</feature>
<feature type="chain" id="PRO_0000019751" description="Uncharacterized lipoprotein YhcJ">
    <location>
        <begin position="20"/>
        <end position="276"/>
    </location>
</feature>
<feature type="lipid moiety-binding region" description="N-palmitoyl cysteine" evidence="1">
    <location>
        <position position="20"/>
    </location>
</feature>
<feature type="lipid moiety-binding region" description="S-diacylglycerol cysteine" evidence="1">
    <location>
        <position position="20"/>
    </location>
</feature>
<feature type="sequence conflict" description="In Ref. 2; AAB01345." evidence="2" ref="2">
    <original>A</original>
    <variation>T</variation>
    <location>
        <position position="79"/>
    </location>
</feature>
<feature type="sequence conflict" description="In Ref. 2; AAB01345." evidence="2" ref="2">
    <original>I</original>
    <variation>L</variation>
    <location>
        <position position="118"/>
    </location>
</feature>
<feature type="sequence conflict" description="In Ref. 2; AAB01345." evidence="2" ref="2">
    <original>H</original>
    <variation>L</variation>
    <location>
        <position position="170"/>
    </location>
</feature>
<feature type="sequence conflict" description="In Ref. 1; CAA65694." evidence="2" ref="1">
    <original>PAFLPLKRLSDWKNEFEH</original>
    <variation>RLFCL</variation>
    <location>
        <begin position="259"/>
        <end position="276"/>
    </location>
</feature>
<feature type="sequence conflict" description="In Ref. 2; AAB01345." evidence="2" ref="2">
    <original>LPLKRLSDWKNEFEH</original>
    <variation>CL</variation>
    <location>
        <begin position="262"/>
        <end position="276"/>
    </location>
</feature>
<sequence length="276" mass="30763">MKKWLICSFVLVLLVSFTACSPSAEHESIKIGIAESDGAIWNYIAQKAEEAGLDIQLIPFSDYAESDIALANKEIDANAFQTISYFQSFTEKYKLNLAPLGTTYITPMGIYSKRYERIRDISRGAVVSVPDKAFDFGRALTVLQEAGLLTLKNGFNGTGSVDMIKDNPRHLKLKAVRQQDAVSGADVFVMKPSEAKKAGLNPKKHTLKSGGLMSEEEMNLIVVRAEDQDREALQTILELYQADDTAAFIEKEYQGDLVPAFLPLKRLSDWKNEFEH</sequence>
<protein>
    <recommendedName>
        <fullName>Uncharacterized lipoprotein YhcJ</fullName>
    </recommendedName>
</protein>
<comment type="subcellular location">
    <subcellularLocation>
        <location evidence="2">Cell membrane</location>
        <topology evidence="2">Lipid-anchor</topology>
    </subcellularLocation>
</comment>
<comment type="similarity">
    <text evidence="2">Belongs to the NlpA lipoprotein family.</text>
</comment>
<evidence type="ECO:0000255" key="1">
    <source>
        <dbReference type="PROSITE-ProRule" id="PRU00303"/>
    </source>
</evidence>
<evidence type="ECO:0000305" key="2"/>
<reference key="1">
    <citation type="journal article" date="1996" name="Microbiology">
        <title>A 22 kb DNA sequence in the cspB-glpPFKD region at 75 degrees on the Bacillus subtilis chromosome.</title>
        <authorList>
            <person name="Noback M.A."/>
            <person name="Terpstra P."/>
            <person name="Holsappel S."/>
            <person name="Venema G."/>
            <person name="Bron S."/>
        </authorList>
    </citation>
    <scope>NUCLEOTIDE SEQUENCE [GENOMIC DNA]</scope>
    <source>
        <strain>168</strain>
    </source>
</reference>
<reference key="2">
    <citation type="submission" date="1996-05" db="EMBL/GenBank/DDBJ databases">
        <authorList>
            <person name="Wendrich T.M."/>
            <person name="Marahiel M.A."/>
        </authorList>
    </citation>
    <scope>NUCLEOTIDE SEQUENCE [GENOMIC DNA]</scope>
    <source>
        <strain>168 / JH642</strain>
    </source>
</reference>
<reference key="3">
    <citation type="journal article" date="1997" name="Nature">
        <title>The complete genome sequence of the Gram-positive bacterium Bacillus subtilis.</title>
        <authorList>
            <person name="Kunst F."/>
            <person name="Ogasawara N."/>
            <person name="Moszer I."/>
            <person name="Albertini A.M."/>
            <person name="Alloni G."/>
            <person name="Azevedo V."/>
            <person name="Bertero M.G."/>
            <person name="Bessieres P."/>
            <person name="Bolotin A."/>
            <person name="Borchert S."/>
            <person name="Borriss R."/>
            <person name="Boursier L."/>
            <person name="Brans A."/>
            <person name="Braun M."/>
            <person name="Brignell S.C."/>
            <person name="Bron S."/>
            <person name="Brouillet S."/>
            <person name="Bruschi C.V."/>
            <person name="Caldwell B."/>
            <person name="Capuano V."/>
            <person name="Carter N.M."/>
            <person name="Choi S.-K."/>
            <person name="Codani J.-J."/>
            <person name="Connerton I.F."/>
            <person name="Cummings N.J."/>
            <person name="Daniel R.A."/>
            <person name="Denizot F."/>
            <person name="Devine K.M."/>
            <person name="Duesterhoeft A."/>
            <person name="Ehrlich S.D."/>
            <person name="Emmerson P.T."/>
            <person name="Entian K.-D."/>
            <person name="Errington J."/>
            <person name="Fabret C."/>
            <person name="Ferrari E."/>
            <person name="Foulger D."/>
            <person name="Fritz C."/>
            <person name="Fujita M."/>
            <person name="Fujita Y."/>
            <person name="Fuma S."/>
            <person name="Galizzi A."/>
            <person name="Galleron N."/>
            <person name="Ghim S.-Y."/>
            <person name="Glaser P."/>
            <person name="Goffeau A."/>
            <person name="Golightly E.J."/>
            <person name="Grandi G."/>
            <person name="Guiseppi G."/>
            <person name="Guy B.J."/>
            <person name="Haga K."/>
            <person name="Haiech J."/>
            <person name="Harwood C.R."/>
            <person name="Henaut A."/>
            <person name="Hilbert H."/>
            <person name="Holsappel S."/>
            <person name="Hosono S."/>
            <person name="Hullo M.-F."/>
            <person name="Itaya M."/>
            <person name="Jones L.-M."/>
            <person name="Joris B."/>
            <person name="Karamata D."/>
            <person name="Kasahara Y."/>
            <person name="Klaerr-Blanchard M."/>
            <person name="Klein C."/>
            <person name="Kobayashi Y."/>
            <person name="Koetter P."/>
            <person name="Koningstein G."/>
            <person name="Krogh S."/>
            <person name="Kumano M."/>
            <person name="Kurita K."/>
            <person name="Lapidus A."/>
            <person name="Lardinois S."/>
            <person name="Lauber J."/>
            <person name="Lazarevic V."/>
            <person name="Lee S.-M."/>
            <person name="Levine A."/>
            <person name="Liu H."/>
            <person name="Masuda S."/>
            <person name="Mauel C."/>
            <person name="Medigue C."/>
            <person name="Medina N."/>
            <person name="Mellado R.P."/>
            <person name="Mizuno M."/>
            <person name="Moestl D."/>
            <person name="Nakai S."/>
            <person name="Noback M."/>
            <person name="Noone D."/>
            <person name="O'Reilly M."/>
            <person name="Ogawa K."/>
            <person name="Ogiwara A."/>
            <person name="Oudega B."/>
            <person name="Park S.-H."/>
            <person name="Parro V."/>
            <person name="Pohl T.M."/>
            <person name="Portetelle D."/>
            <person name="Porwollik S."/>
            <person name="Prescott A.M."/>
            <person name="Presecan E."/>
            <person name="Pujic P."/>
            <person name="Purnelle B."/>
            <person name="Rapoport G."/>
            <person name="Rey M."/>
            <person name="Reynolds S."/>
            <person name="Rieger M."/>
            <person name="Rivolta C."/>
            <person name="Rocha E."/>
            <person name="Roche B."/>
            <person name="Rose M."/>
            <person name="Sadaie Y."/>
            <person name="Sato T."/>
            <person name="Scanlan E."/>
            <person name="Schleich S."/>
            <person name="Schroeter R."/>
            <person name="Scoffone F."/>
            <person name="Sekiguchi J."/>
            <person name="Sekowska A."/>
            <person name="Seror S.J."/>
            <person name="Serror P."/>
            <person name="Shin B.-S."/>
            <person name="Soldo B."/>
            <person name="Sorokin A."/>
            <person name="Tacconi E."/>
            <person name="Takagi T."/>
            <person name="Takahashi H."/>
            <person name="Takemaru K."/>
            <person name="Takeuchi M."/>
            <person name="Tamakoshi A."/>
            <person name="Tanaka T."/>
            <person name="Terpstra P."/>
            <person name="Tognoni A."/>
            <person name="Tosato V."/>
            <person name="Uchiyama S."/>
            <person name="Vandenbol M."/>
            <person name="Vannier F."/>
            <person name="Vassarotti A."/>
            <person name="Viari A."/>
            <person name="Wambutt R."/>
            <person name="Wedler E."/>
            <person name="Wedler H."/>
            <person name="Weitzenegger T."/>
            <person name="Winters P."/>
            <person name="Wipat A."/>
            <person name="Yamamoto H."/>
            <person name="Yamane K."/>
            <person name="Yasumoto K."/>
            <person name="Yata K."/>
            <person name="Yoshida K."/>
            <person name="Yoshikawa H.-F."/>
            <person name="Zumstein E."/>
            <person name="Yoshikawa H."/>
            <person name="Danchin A."/>
        </authorList>
    </citation>
    <scope>NUCLEOTIDE SEQUENCE [LARGE SCALE GENOMIC DNA]</scope>
    <source>
        <strain>168</strain>
    </source>
</reference>
<reference key="4">
    <citation type="journal article" date="2009" name="Microbiology">
        <title>From a consortium sequence to a unified sequence: the Bacillus subtilis 168 reference genome a decade later.</title>
        <authorList>
            <person name="Barbe V."/>
            <person name="Cruveiller S."/>
            <person name="Kunst F."/>
            <person name="Lenoble P."/>
            <person name="Meurice G."/>
            <person name="Sekowska A."/>
            <person name="Vallenet D."/>
            <person name="Wang T."/>
            <person name="Moszer I."/>
            <person name="Medigue C."/>
            <person name="Danchin A."/>
        </authorList>
    </citation>
    <scope>SEQUENCE REVISION TO C-TERMINUS</scope>
</reference>
<organism>
    <name type="scientific">Bacillus subtilis (strain 168)</name>
    <dbReference type="NCBI Taxonomy" id="224308"/>
    <lineage>
        <taxon>Bacteria</taxon>
        <taxon>Bacillati</taxon>
        <taxon>Bacillota</taxon>
        <taxon>Bacilli</taxon>
        <taxon>Bacillales</taxon>
        <taxon>Bacillaceae</taxon>
        <taxon>Bacillus</taxon>
    </lineage>
</organism>
<accession>P54594</accession>
<name>YHCJ_BACSU</name>
<proteinExistence type="inferred from homology"/>